<gene>
    <name evidence="1" type="primary">hpf</name>
    <name type="ordered locus">blr0724</name>
</gene>
<name>HPF_BRADU</name>
<accession>P30334</accession>
<sequence length="203" mass="21626">MTLRISGKSVSVGEALRGRVSDRTEEVLRKYFDGNYSGHITLSKDGFGFRTDCALHLDSGITLEADSNAPDAYASADQALVMIEKRLKRYKSRLKDRSARKAHVASAALAAMDATSYVLEAPGEGEDEDEVTGYSPVIIAEATTSLKQLSVSEAVMELDLSGAPCLVFQHGSSGRVNIIYRRADGNVGWVDPPGGKADGKAGG</sequence>
<proteinExistence type="inferred from homology"/>
<reference key="1">
    <citation type="journal article" date="1991" name="J. Bacteriol.">
        <title>Bradyrhizobium japonicum has two differentially regulated, functional homologs of the sigma 54 gene (rpoN).</title>
        <authorList>
            <person name="Kullik I."/>
            <person name="Fritsche S."/>
            <person name="Knobel H."/>
            <person name="Sanjuan J."/>
            <person name="Hennecke H."/>
            <person name="Fischer H.-M."/>
        </authorList>
    </citation>
    <scope>NUCLEOTIDE SEQUENCE [GENOMIC DNA]</scope>
    <source>
        <strain>USDA 110spc4</strain>
    </source>
</reference>
<reference key="2">
    <citation type="journal article" date="2002" name="DNA Res.">
        <title>Complete genomic sequence of nitrogen-fixing symbiotic bacterium Bradyrhizobium japonicum USDA110.</title>
        <authorList>
            <person name="Kaneko T."/>
            <person name="Nakamura Y."/>
            <person name="Sato S."/>
            <person name="Minamisawa K."/>
            <person name="Uchiumi T."/>
            <person name="Sasamoto S."/>
            <person name="Watanabe A."/>
            <person name="Idesawa K."/>
            <person name="Iriguchi M."/>
            <person name="Kawashima K."/>
            <person name="Kohara M."/>
            <person name="Matsumoto M."/>
            <person name="Shimpo S."/>
            <person name="Tsuruoka H."/>
            <person name="Wada T."/>
            <person name="Yamada M."/>
            <person name="Tabata S."/>
        </authorList>
    </citation>
    <scope>NUCLEOTIDE SEQUENCE [LARGE SCALE GENOMIC DNA]</scope>
    <source>
        <strain>JCM 10833 / BCRC 13528 / IAM 13628 / NBRC 14792 / USDA 110</strain>
    </source>
</reference>
<keyword id="KW-0963">Cytoplasm</keyword>
<keyword id="KW-1185">Reference proteome</keyword>
<keyword id="KW-0810">Translation regulation</keyword>
<comment type="function">
    <text evidence="1">Required for dimerization of active 70S ribosomes into 100S ribosomes in stationary phase; 100S ribosomes are translationally inactive and sometimes present during exponential growth.</text>
</comment>
<comment type="subunit">
    <text evidence="1">Interacts with 100S ribosomes.</text>
</comment>
<comment type="subcellular location">
    <subcellularLocation>
        <location evidence="1">Cytoplasm</location>
    </subcellularLocation>
</comment>
<comment type="similarity">
    <text evidence="1">Belongs to the HPF/YfiA ribosome-associated protein family. Long HPF subfamily.</text>
</comment>
<feature type="chain" id="PRO_0000097416" description="Ribosome hibernation promotion factor">
    <location>
        <begin position="1"/>
        <end position="203"/>
    </location>
</feature>
<dbReference type="EMBL" id="M59243">
    <property type="protein sequence ID" value="AAA26242.1"/>
    <property type="molecule type" value="Genomic_DNA"/>
</dbReference>
<dbReference type="EMBL" id="BA000040">
    <property type="protein sequence ID" value="BAC45989.1"/>
    <property type="molecule type" value="Genomic_DNA"/>
</dbReference>
<dbReference type="PIR" id="C38179">
    <property type="entry name" value="C38179"/>
</dbReference>
<dbReference type="RefSeq" id="NP_767364.1">
    <property type="nucleotide sequence ID" value="NC_004463.1"/>
</dbReference>
<dbReference type="RefSeq" id="WP_011083549.1">
    <property type="nucleotide sequence ID" value="NC_004463.1"/>
</dbReference>
<dbReference type="SMR" id="P30334"/>
<dbReference type="STRING" id="224911.AAV28_00465"/>
<dbReference type="EnsemblBacteria" id="BAC45989">
    <property type="protein sequence ID" value="BAC45989"/>
    <property type="gene ID" value="BAC45989"/>
</dbReference>
<dbReference type="GeneID" id="46487999"/>
<dbReference type="KEGG" id="bja:blr0724"/>
<dbReference type="PATRIC" id="fig|224911.44.peg.96"/>
<dbReference type="eggNOG" id="COG1544">
    <property type="taxonomic scope" value="Bacteria"/>
</dbReference>
<dbReference type="HOGENOM" id="CLU_071472_0_1_5"/>
<dbReference type="InParanoid" id="P30334"/>
<dbReference type="OrthoDB" id="9794975at2"/>
<dbReference type="PhylomeDB" id="P30334"/>
<dbReference type="Proteomes" id="UP000002526">
    <property type="component" value="Chromosome"/>
</dbReference>
<dbReference type="GO" id="GO:0022627">
    <property type="term" value="C:cytosolic small ribosomal subunit"/>
    <property type="evidence" value="ECO:0000318"/>
    <property type="project" value="GO_Central"/>
</dbReference>
<dbReference type="GO" id="GO:0043024">
    <property type="term" value="F:ribosomal small subunit binding"/>
    <property type="evidence" value="ECO:0000318"/>
    <property type="project" value="GO_Central"/>
</dbReference>
<dbReference type="GO" id="GO:0045900">
    <property type="term" value="P:negative regulation of translational elongation"/>
    <property type="evidence" value="ECO:0000318"/>
    <property type="project" value="GO_Central"/>
</dbReference>
<dbReference type="CDD" id="cd00552">
    <property type="entry name" value="RaiA"/>
    <property type="match status" value="1"/>
</dbReference>
<dbReference type="Gene3D" id="3.30.160.100">
    <property type="entry name" value="Ribosome hibernation promotion factor-like"/>
    <property type="match status" value="1"/>
</dbReference>
<dbReference type="Gene3D" id="3.30.505.50">
    <property type="entry name" value="Sigma 54 modulation/S30EA ribosomal protein, C-terminal domain"/>
    <property type="match status" value="1"/>
</dbReference>
<dbReference type="HAMAP" id="MF_00839">
    <property type="entry name" value="HPF"/>
    <property type="match status" value="1"/>
</dbReference>
<dbReference type="InterPro" id="IPR050574">
    <property type="entry name" value="HPF/YfiA_ribosome-assoc"/>
</dbReference>
<dbReference type="InterPro" id="IPR034694">
    <property type="entry name" value="HPF_long/plastid"/>
</dbReference>
<dbReference type="InterPro" id="IPR036567">
    <property type="entry name" value="RHF-like"/>
</dbReference>
<dbReference type="InterPro" id="IPR003489">
    <property type="entry name" value="RHF/RaiA"/>
</dbReference>
<dbReference type="InterPro" id="IPR032528">
    <property type="entry name" value="Ribosom_S30AE_C"/>
</dbReference>
<dbReference type="InterPro" id="IPR038416">
    <property type="entry name" value="Ribosom_S30AE_C_sf"/>
</dbReference>
<dbReference type="NCBIfam" id="TIGR00741">
    <property type="entry name" value="yfiA"/>
    <property type="match status" value="1"/>
</dbReference>
<dbReference type="PANTHER" id="PTHR33231">
    <property type="entry name" value="30S RIBOSOMAL PROTEIN"/>
    <property type="match status" value="1"/>
</dbReference>
<dbReference type="PANTHER" id="PTHR33231:SF1">
    <property type="entry name" value="30S RIBOSOMAL PROTEIN"/>
    <property type="match status" value="1"/>
</dbReference>
<dbReference type="Pfam" id="PF16321">
    <property type="entry name" value="Ribosom_S30AE_C"/>
    <property type="match status" value="1"/>
</dbReference>
<dbReference type="Pfam" id="PF02482">
    <property type="entry name" value="Ribosomal_S30AE"/>
    <property type="match status" value="1"/>
</dbReference>
<dbReference type="SUPFAM" id="SSF69754">
    <property type="entry name" value="Ribosome binding protein Y (YfiA homologue)"/>
    <property type="match status" value="1"/>
</dbReference>
<evidence type="ECO:0000255" key="1">
    <source>
        <dbReference type="HAMAP-Rule" id="MF_00839"/>
    </source>
</evidence>
<organism>
    <name type="scientific">Bradyrhizobium diazoefficiens (strain JCM 10833 / BCRC 13528 / IAM 13628 / NBRC 14792 / USDA 110)</name>
    <dbReference type="NCBI Taxonomy" id="224911"/>
    <lineage>
        <taxon>Bacteria</taxon>
        <taxon>Pseudomonadati</taxon>
        <taxon>Pseudomonadota</taxon>
        <taxon>Alphaproteobacteria</taxon>
        <taxon>Hyphomicrobiales</taxon>
        <taxon>Nitrobacteraceae</taxon>
        <taxon>Bradyrhizobium</taxon>
    </lineage>
</organism>
<protein>
    <recommendedName>
        <fullName evidence="1">Ribosome hibernation promotion factor</fullName>
        <shortName evidence="1">HPF</shortName>
    </recommendedName>
</protein>